<gene>
    <name evidence="1" type="primary">fadB</name>
    <name type="ordered locus">PLES_20481</name>
</gene>
<name>FADB_PSEA8</name>
<protein>
    <recommendedName>
        <fullName evidence="1">Fatty acid oxidation complex subunit alpha</fullName>
    </recommendedName>
    <domain>
        <recommendedName>
            <fullName evidence="1">Enoyl-CoA hydratase/Delta(3)-cis-Delta(2)-trans-enoyl-CoA isomerase/3-hydroxybutyryl-CoA epimerase</fullName>
            <ecNumber evidence="1">4.2.1.17</ecNumber>
            <ecNumber evidence="1">5.1.2.3</ecNumber>
            <ecNumber evidence="1">5.3.3.8</ecNumber>
        </recommendedName>
    </domain>
    <domain>
        <recommendedName>
            <fullName evidence="1">3-hydroxyacyl-CoA dehydrogenase</fullName>
            <ecNumber evidence="1">1.1.1.35</ecNumber>
        </recommendedName>
    </domain>
</protein>
<accession>B7UYR6</accession>
<evidence type="ECO:0000255" key="1">
    <source>
        <dbReference type="HAMAP-Rule" id="MF_01621"/>
    </source>
</evidence>
<sequence length="715" mass="76954">MIYQGKAITVKPLEGGIVELNFDLKGESVNKFNRLTLSELRAAVDAIKADASVKGVIVTSGKDVFIVGADITEFVDNFQLPDEELMAGNLEANKIFSDFEDLDVPTVAAINGIALGGGLEMCLAADFRVMSATAKVGLPEVKLGIYPGFGGTVRLPRLIGCDNAVEWIASGKENKAEDALKVGAVDAVVAPEQLQAAALDLAKRAVAGELDHKARRQPKLEKLKLNAIEQMMAFETAKGFVAGQAGPNYPAPVEAIKSIQKAANFGRDKALEVEAAGFVKLAKTSVAQSLIGLFLNDQELKKKAKKYDEVAKDVKLAAVLGAGIMGGGIAYQSALKGTPILMKDIREEGIQMGLNEAAKLLGKRVEKGRLTPAKMAEALNGIRPTMSYGDFGNVDIVVEAVVENPKVKQAVLAEVEGAVKEDAIIASNTSTISISLLAQALKRPENFCGMHFFNPVHMMPLVEVIRGEKTGETAIATTVAYAKKMGKSPIVVNDCPGFLVNRVLFPYFGGFAKLLSFGVDFVRIDKVMEKFGWPMGPAYLSDVVGIDTGHHGRDVMAEGFPDRMAVEGKTAVDVMYEANRLGQKNGKGFYAYETDKRGKPKKVTDPQAYEVLKPIVVEQREVTDEDIVNFMMIPLCLETVRCLEDGIVETAAEADMGLIYGIGFPPFRGGALRYIDSIGVAEFVALADKYAELGALYHPTAKLREMAKNGQKFFG</sequence>
<reference key="1">
    <citation type="journal article" date="2009" name="Genome Res.">
        <title>Newly introduced genomic prophage islands are critical determinants of in vivo competitiveness in the Liverpool epidemic strain of Pseudomonas aeruginosa.</title>
        <authorList>
            <person name="Winstanley C."/>
            <person name="Langille M.G.I."/>
            <person name="Fothergill J.L."/>
            <person name="Kukavica-Ibrulj I."/>
            <person name="Paradis-Bleau C."/>
            <person name="Sanschagrin F."/>
            <person name="Thomson N.R."/>
            <person name="Winsor G.L."/>
            <person name="Quail M.A."/>
            <person name="Lennard N."/>
            <person name="Bignell A."/>
            <person name="Clarke L."/>
            <person name="Seeger K."/>
            <person name="Saunders D."/>
            <person name="Harris D."/>
            <person name="Parkhill J."/>
            <person name="Hancock R.E.W."/>
            <person name="Brinkman F.S.L."/>
            <person name="Levesque R.C."/>
        </authorList>
    </citation>
    <scope>NUCLEOTIDE SEQUENCE [LARGE SCALE GENOMIC DNA]</scope>
    <source>
        <strain>LESB58</strain>
    </source>
</reference>
<organism>
    <name type="scientific">Pseudomonas aeruginosa (strain LESB58)</name>
    <dbReference type="NCBI Taxonomy" id="557722"/>
    <lineage>
        <taxon>Bacteria</taxon>
        <taxon>Pseudomonadati</taxon>
        <taxon>Pseudomonadota</taxon>
        <taxon>Gammaproteobacteria</taxon>
        <taxon>Pseudomonadales</taxon>
        <taxon>Pseudomonadaceae</taxon>
        <taxon>Pseudomonas</taxon>
    </lineage>
</organism>
<keyword id="KW-0276">Fatty acid metabolism</keyword>
<keyword id="KW-0413">Isomerase</keyword>
<keyword id="KW-0442">Lipid degradation</keyword>
<keyword id="KW-0443">Lipid metabolism</keyword>
<keyword id="KW-0456">Lyase</keyword>
<keyword id="KW-0511">Multifunctional enzyme</keyword>
<keyword id="KW-0520">NAD</keyword>
<keyword id="KW-0560">Oxidoreductase</keyword>
<feature type="chain" id="PRO_1000186045" description="Fatty acid oxidation complex subunit alpha">
    <location>
        <begin position="1"/>
        <end position="715"/>
    </location>
</feature>
<feature type="region of interest" description="Enoyl-CoA hydratase/isomerase" evidence="1">
    <location>
        <begin position="1"/>
        <end position="190"/>
    </location>
</feature>
<feature type="region of interest" description="3-hydroxyacyl-CoA dehydrogenase" evidence="1">
    <location>
        <begin position="312"/>
        <end position="715"/>
    </location>
</feature>
<feature type="active site" description="For 3-hydroxyacyl-CoA dehydrogenase activity" evidence="1">
    <location>
        <position position="451"/>
    </location>
</feature>
<feature type="binding site" evidence="1">
    <location>
        <position position="297"/>
    </location>
    <ligand>
        <name>substrate</name>
    </ligand>
</feature>
<feature type="binding site" evidence="1">
    <location>
        <position position="325"/>
    </location>
    <ligand>
        <name>NAD(+)</name>
        <dbReference type="ChEBI" id="CHEBI:57540"/>
    </ligand>
</feature>
<feature type="binding site" evidence="1">
    <location>
        <position position="344"/>
    </location>
    <ligand>
        <name>NAD(+)</name>
        <dbReference type="ChEBI" id="CHEBI:57540"/>
    </ligand>
</feature>
<feature type="binding site" evidence="1">
    <location>
        <begin position="401"/>
        <end position="403"/>
    </location>
    <ligand>
        <name>NAD(+)</name>
        <dbReference type="ChEBI" id="CHEBI:57540"/>
    </ligand>
</feature>
<feature type="binding site" evidence="1">
    <location>
        <position position="408"/>
    </location>
    <ligand>
        <name>NAD(+)</name>
        <dbReference type="ChEBI" id="CHEBI:57540"/>
    </ligand>
</feature>
<feature type="binding site" evidence="1">
    <location>
        <position position="430"/>
    </location>
    <ligand>
        <name>NAD(+)</name>
        <dbReference type="ChEBI" id="CHEBI:57540"/>
    </ligand>
</feature>
<feature type="binding site" evidence="1">
    <location>
        <position position="454"/>
    </location>
    <ligand>
        <name>NAD(+)</name>
        <dbReference type="ChEBI" id="CHEBI:57540"/>
    </ligand>
</feature>
<feature type="binding site" evidence="1">
    <location>
        <position position="501"/>
    </location>
    <ligand>
        <name>substrate</name>
    </ligand>
</feature>
<feature type="binding site" evidence="1">
    <location>
        <position position="660"/>
    </location>
    <ligand>
        <name>substrate</name>
    </ligand>
</feature>
<feature type="site" description="Important for catalytic activity" evidence="1">
    <location>
        <position position="120"/>
    </location>
</feature>
<feature type="site" description="Important for catalytic activity" evidence="1">
    <location>
        <position position="140"/>
    </location>
</feature>
<dbReference type="EC" id="4.2.1.17" evidence="1"/>
<dbReference type="EC" id="5.1.2.3" evidence="1"/>
<dbReference type="EC" id="5.3.3.8" evidence="1"/>
<dbReference type="EC" id="1.1.1.35" evidence="1"/>
<dbReference type="EMBL" id="FM209186">
    <property type="protein sequence ID" value="CAW26775.1"/>
    <property type="molecule type" value="Genomic_DNA"/>
</dbReference>
<dbReference type="RefSeq" id="WP_003091204.1">
    <property type="nucleotide sequence ID" value="NC_011770.1"/>
</dbReference>
<dbReference type="SMR" id="B7UYR6"/>
<dbReference type="KEGG" id="pag:PLES_20481"/>
<dbReference type="HOGENOM" id="CLU_009834_16_3_6"/>
<dbReference type="UniPathway" id="UPA00659"/>
<dbReference type="GO" id="GO:0036125">
    <property type="term" value="C:fatty acid beta-oxidation multienzyme complex"/>
    <property type="evidence" value="ECO:0007669"/>
    <property type="project" value="InterPro"/>
</dbReference>
<dbReference type="GO" id="GO:0008692">
    <property type="term" value="F:3-hydroxybutyryl-CoA epimerase activity"/>
    <property type="evidence" value="ECO:0007669"/>
    <property type="project" value="UniProtKB-UniRule"/>
</dbReference>
<dbReference type="GO" id="GO:0004165">
    <property type="term" value="F:delta(3)-delta(2)-enoyl-CoA isomerase activity"/>
    <property type="evidence" value="ECO:0007669"/>
    <property type="project" value="UniProtKB-UniRule"/>
</dbReference>
<dbReference type="GO" id="GO:0004300">
    <property type="term" value="F:enoyl-CoA hydratase activity"/>
    <property type="evidence" value="ECO:0007669"/>
    <property type="project" value="UniProtKB-UniRule"/>
</dbReference>
<dbReference type="GO" id="GO:0016509">
    <property type="term" value="F:long-chain-3-hydroxyacyl-CoA dehydrogenase activity"/>
    <property type="evidence" value="ECO:0007669"/>
    <property type="project" value="TreeGrafter"/>
</dbReference>
<dbReference type="GO" id="GO:0070403">
    <property type="term" value="F:NAD+ binding"/>
    <property type="evidence" value="ECO:0007669"/>
    <property type="project" value="InterPro"/>
</dbReference>
<dbReference type="GO" id="GO:0006635">
    <property type="term" value="P:fatty acid beta-oxidation"/>
    <property type="evidence" value="ECO:0007669"/>
    <property type="project" value="UniProtKB-UniRule"/>
</dbReference>
<dbReference type="CDD" id="cd06558">
    <property type="entry name" value="crotonase-like"/>
    <property type="match status" value="1"/>
</dbReference>
<dbReference type="FunFam" id="1.10.1040.50:FF:000001">
    <property type="entry name" value="Fatty acid oxidation complex subunit alpha"/>
    <property type="match status" value="1"/>
</dbReference>
<dbReference type="FunFam" id="3.90.226.10:FF:000018">
    <property type="entry name" value="Fatty acid oxidation complex subunit alpha"/>
    <property type="match status" value="1"/>
</dbReference>
<dbReference type="FunFam" id="3.40.50.720:FF:000009">
    <property type="entry name" value="Fatty oxidation complex, alpha subunit"/>
    <property type="match status" value="1"/>
</dbReference>
<dbReference type="Gene3D" id="1.10.1040.50">
    <property type="match status" value="1"/>
</dbReference>
<dbReference type="Gene3D" id="3.90.226.10">
    <property type="entry name" value="2-enoyl-CoA Hydratase, Chain A, domain 1"/>
    <property type="match status" value="1"/>
</dbReference>
<dbReference type="Gene3D" id="3.40.50.720">
    <property type="entry name" value="NAD(P)-binding Rossmann-like Domain"/>
    <property type="match status" value="1"/>
</dbReference>
<dbReference type="HAMAP" id="MF_01621">
    <property type="entry name" value="FadB"/>
    <property type="match status" value="1"/>
</dbReference>
<dbReference type="InterPro" id="IPR006180">
    <property type="entry name" value="3-OHacyl-CoA_DH_CS"/>
</dbReference>
<dbReference type="InterPro" id="IPR006176">
    <property type="entry name" value="3-OHacyl-CoA_DH_NAD-bd"/>
</dbReference>
<dbReference type="InterPro" id="IPR006108">
    <property type="entry name" value="3HC_DH_C"/>
</dbReference>
<dbReference type="InterPro" id="IPR008927">
    <property type="entry name" value="6-PGluconate_DH-like_C_sf"/>
</dbReference>
<dbReference type="InterPro" id="IPR029045">
    <property type="entry name" value="ClpP/crotonase-like_dom_sf"/>
</dbReference>
<dbReference type="InterPro" id="IPR018376">
    <property type="entry name" value="Enoyl-CoA_hyd/isom_CS"/>
</dbReference>
<dbReference type="InterPro" id="IPR001753">
    <property type="entry name" value="Enoyl-CoA_hydra/iso"/>
</dbReference>
<dbReference type="InterPro" id="IPR050136">
    <property type="entry name" value="FA_oxidation_alpha_subunit"/>
</dbReference>
<dbReference type="InterPro" id="IPR012799">
    <property type="entry name" value="FadB"/>
</dbReference>
<dbReference type="InterPro" id="IPR036291">
    <property type="entry name" value="NAD(P)-bd_dom_sf"/>
</dbReference>
<dbReference type="NCBIfam" id="TIGR02437">
    <property type="entry name" value="FadB"/>
    <property type="match status" value="1"/>
</dbReference>
<dbReference type="NCBIfam" id="NF008727">
    <property type="entry name" value="PRK11730.1"/>
    <property type="match status" value="1"/>
</dbReference>
<dbReference type="PANTHER" id="PTHR43612">
    <property type="entry name" value="TRIFUNCTIONAL ENZYME SUBUNIT ALPHA"/>
    <property type="match status" value="1"/>
</dbReference>
<dbReference type="PANTHER" id="PTHR43612:SF3">
    <property type="entry name" value="TRIFUNCTIONAL ENZYME SUBUNIT ALPHA, MITOCHONDRIAL"/>
    <property type="match status" value="1"/>
</dbReference>
<dbReference type="Pfam" id="PF00725">
    <property type="entry name" value="3HCDH"/>
    <property type="match status" value="1"/>
</dbReference>
<dbReference type="Pfam" id="PF02737">
    <property type="entry name" value="3HCDH_N"/>
    <property type="match status" value="1"/>
</dbReference>
<dbReference type="Pfam" id="PF00378">
    <property type="entry name" value="ECH_1"/>
    <property type="match status" value="1"/>
</dbReference>
<dbReference type="SUPFAM" id="SSF48179">
    <property type="entry name" value="6-phosphogluconate dehydrogenase C-terminal domain-like"/>
    <property type="match status" value="2"/>
</dbReference>
<dbReference type="SUPFAM" id="SSF52096">
    <property type="entry name" value="ClpP/crotonase"/>
    <property type="match status" value="1"/>
</dbReference>
<dbReference type="SUPFAM" id="SSF51735">
    <property type="entry name" value="NAD(P)-binding Rossmann-fold domains"/>
    <property type="match status" value="1"/>
</dbReference>
<dbReference type="PROSITE" id="PS00067">
    <property type="entry name" value="3HCDH"/>
    <property type="match status" value="1"/>
</dbReference>
<dbReference type="PROSITE" id="PS00166">
    <property type="entry name" value="ENOYL_COA_HYDRATASE"/>
    <property type="match status" value="1"/>
</dbReference>
<comment type="function">
    <text evidence="1">Involved in the aerobic and anaerobic degradation of long-chain fatty acids via beta-oxidation cycle. Catalyzes the formation of 3-oxoacyl-CoA from enoyl-CoA via L-3-hydroxyacyl-CoA. It can also use D-3-hydroxyacyl-CoA and cis-3-enoyl-CoA as substrate.</text>
</comment>
<comment type="catalytic activity">
    <reaction evidence="1">
        <text>a (3S)-3-hydroxyacyl-CoA + NAD(+) = a 3-oxoacyl-CoA + NADH + H(+)</text>
        <dbReference type="Rhea" id="RHEA:22432"/>
        <dbReference type="ChEBI" id="CHEBI:15378"/>
        <dbReference type="ChEBI" id="CHEBI:57318"/>
        <dbReference type="ChEBI" id="CHEBI:57540"/>
        <dbReference type="ChEBI" id="CHEBI:57945"/>
        <dbReference type="ChEBI" id="CHEBI:90726"/>
        <dbReference type="EC" id="1.1.1.35"/>
    </reaction>
</comment>
<comment type="catalytic activity">
    <reaction evidence="1">
        <text>a (3S)-3-hydroxyacyl-CoA = a (2E)-enoyl-CoA + H2O</text>
        <dbReference type="Rhea" id="RHEA:16105"/>
        <dbReference type="ChEBI" id="CHEBI:15377"/>
        <dbReference type="ChEBI" id="CHEBI:57318"/>
        <dbReference type="ChEBI" id="CHEBI:58856"/>
        <dbReference type="EC" id="4.2.1.17"/>
    </reaction>
</comment>
<comment type="catalytic activity">
    <reaction evidence="1">
        <text>a 4-saturated-(3S)-3-hydroxyacyl-CoA = a (3E)-enoyl-CoA + H2O</text>
        <dbReference type="Rhea" id="RHEA:20724"/>
        <dbReference type="ChEBI" id="CHEBI:15377"/>
        <dbReference type="ChEBI" id="CHEBI:58521"/>
        <dbReference type="ChEBI" id="CHEBI:137480"/>
        <dbReference type="EC" id="4.2.1.17"/>
    </reaction>
</comment>
<comment type="catalytic activity">
    <reaction evidence="1">
        <text>(3S)-3-hydroxybutanoyl-CoA = (3R)-3-hydroxybutanoyl-CoA</text>
        <dbReference type="Rhea" id="RHEA:21760"/>
        <dbReference type="ChEBI" id="CHEBI:57315"/>
        <dbReference type="ChEBI" id="CHEBI:57316"/>
        <dbReference type="EC" id="5.1.2.3"/>
    </reaction>
</comment>
<comment type="catalytic activity">
    <reaction evidence="1">
        <text>a (3Z)-enoyl-CoA = a 4-saturated (2E)-enoyl-CoA</text>
        <dbReference type="Rhea" id="RHEA:45900"/>
        <dbReference type="ChEBI" id="CHEBI:85097"/>
        <dbReference type="ChEBI" id="CHEBI:85489"/>
        <dbReference type="EC" id="5.3.3.8"/>
    </reaction>
</comment>
<comment type="catalytic activity">
    <reaction evidence="1">
        <text>a (3E)-enoyl-CoA = a 4-saturated (2E)-enoyl-CoA</text>
        <dbReference type="Rhea" id="RHEA:45228"/>
        <dbReference type="ChEBI" id="CHEBI:58521"/>
        <dbReference type="ChEBI" id="CHEBI:85097"/>
        <dbReference type="EC" id="5.3.3.8"/>
    </reaction>
</comment>
<comment type="pathway">
    <text evidence="1">Lipid metabolism; fatty acid beta-oxidation.</text>
</comment>
<comment type="subunit">
    <text evidence="1">Heterotetramer of two alpha chains (FadB) and two beta chains (FadA).</text>
</comment>
<comment type="similarity">
    <text evidence="1">In the N-terminal section; belongs to the enoyl-CoA hydratase/isomerase family.</text>
</comment>
<comment type="similarity">
    <text evidence="1">In the C-terminal section; belongs to the 3-hydroxyacyl-CoA dehydrogenase family.</text>
</comment>
<proteinExistence type="inferred from homology"/>